<name>FAZ1_TRYB9</name>
<proteinExistence type="inferred from homology"/>
<dbReference type="EMBL" id="FN554967">
    <property type="protein sequence ID" value="CBH10670.1"/>
    <property type="molecule type" value="Genomic_DNA"/>
</dbReference>
<dbReference type="RefSeq" id="XP_011772958.1">
    <property type="nucleotide sequence ID" value="XM_011774656.1"/>
</dbReference>
<dbReference type="SMR" id="C9ZN16"/>
<dbReference type="GeneID" id="23859805"/>
<dbReference type="KEGG" id="tbg:TbgDal_IV3690"/>
<dbReference type="VEuPathDB" id="TriTrypDB:Tbg972.4.3690"/>
<dbReference type="OrthoDB" id="9000at5690"/>
<dbReference type="Proteomes" id="UP000002316">
    <property type="component" value="Chromosome 4"/>
</dbReference>
<dbReference type="GO" id="GO:0005856">
    <property type="term" value="C:cytoskeleton"/>
    <property type="evidence" value="ECO:0007669"/>
    <property type="project" value="TreeGrafter"/>
</dbReference>
<dbReference type="GO" id="GO:0031514">
    <property type="term" value="C:motile cilium"/>
    <property type="evidence" value="ECO:0007669"/>
    <property type="project" value="UniProtKB-SubCell"/>
</dbReference>
<dbReference type="Gene3D" id="1.20.920.20">
    <property type="match status" value="1"/>
</dbReference>
<dbReference type="InterPro" id="IPR056615">
    <property type="entry name" value="FAZ1_C"/>
</dbReference>
<dbReference type="InterPro" id="IPR056614">
    <property type="entry name" value="FAZ1_cons"/>
</dbReference>
<dbReference type="PANTHER" id="PTHR32083">
    <property type="entry name" value="CILIA AND FLAGELLA-ASSOCIATED PROTEIN 58-RELATED"/>
    <property type="match status" value="1"/>
</dbReference>
<dbReference type="PANTHER" id="PTHR32083:SF48">
    <property type="entry name" value="TRANS-GOLGI NETWORK-LOCALIZED SYP41-INTERACTING PROTEIN 1"/>
    <property type="match status" value="1"/>
</dbReference>
<dbReference type="Pfam" id="PF23404">
    <property type="entry name" value="FAZ1_C"/>
    <property type="match status" value="22"/>
</dbReference>
<dbReference type="Pfam" id="PF23398">
    <property type="entry name" value="FAZ1_cons"/>
    <property type="match status" value="2"/>
</dbReference>
<protein>
    <recommendedName>
        <fullName evidence="1">Flagellar attachment zone protein 1</fullName>
    </recommendedName>
</protein>
<sequence>MALLNVISENPLTLQPGQVIAFDHLANGEHWQWALGTVVSSDKHVVVVEQWAVNEGSCETLKHNISSEIQKEMKRMGVFQEQLSSARDKLAAIRSENEDRVSAARAVFEDAKARVASVDEVHMREVTSQACPSPVAVEVLKCVLALAQNDPTVTNCSTWDDIRMEYRRPNAIADFISADITGKTYPNAEEICSSLNEQRLSSLAASRDSEAISSLHHWVLSALAYQEAYCRLTTDTRVQEQNDAIANCIAGMKGCRLKVMKLKEELERGGTPTFGGQLTSFTKTSVQLKAPLSSVISIVGVDPSAQDCVLTDDEVGLILDKAEQTRLQINDHFSHLSNSYMEAMAELHCLSMYTSELEERRLNLQERFVFSLFTNAGKTNAPRRERIETDVGLRSVEAPRGDSANNIKDLQEIIKELSSHDERWMYRNEPTVTTKHRKSYPGREWSKVVERKPEELLSTFRTEQAAACHVPEDAIRNIEFTATSEKLQVSFDVQHPVKQTAAEINKRLQEFPSRGMDRMLCDVDQPKKGLDRAIVEVCRAFDLREHAFRGMTFDKFIEEVAMKGRVGDKDAYESEIGDLLMLLDKIHNENRSLQYTLEKSAEEFRRQTASTMREQESLRQRNGELHAEIGRLRDLVEKLRDLADNQASELELLKLQKTQANQIRAQRNLSTFRGDDTAEPVYCVTLDELREQTEHCDQVERELERQREQCQNLLNAQDDLLAELSGVSEEKEKLEAECERLEAELRQMEEKSRLSEQGLSEMTQRLEEKQAEIEGLLENLEQLDEQLEALRAAEKSAQAHIEARDREISDLQQRLEGEIDDHIKTTALLEELRKHYNNLEELFDKQEAELMAYREKRQNAHKVRSLEPTLRPIGTQTKPFQEVVSADEISSEPLLSVTLDEYNDHMHRSNQFQQENDLLRQQLQQANDERENLHDRLEQLMAENQSLSEQLHNMHEELEREERDRSGVTLQNERLAEEIQRKTAENEQLVLENNKSRSDIRNLNVQVQRLMEELELKAAENEKLAEELELKAAENEKLAEELELKAAENEKLAEALDLKAAENEKLAEELELKVAENEKLAEELELKVAENEKLAEELELKAAENEKLAEELELKAAENEKLAEELELKAAENEKLAEELELKAAENEKLAEALDLKAAENEKLAEELDLKAAENEKLAEELELKVAENEKLAEELELKAAENEKLAEELELKAAENEKLAEELELKAAENEKLAEELELKVAENEKLAEELELKAAENEKLAEELELKAAENEKLAEELELKAAENEKLAEELELKVAENEKLAEELELKAAENEKLAEELELKAAENEKLAEELELKAAENEKLAEELELKAAENEKLAEELELKAAENEKLAEELELKAAENEKLAEELELKAAENEKLAEELELKAAENEKLAEELELKAAENEKLAEELELKAAENEKLAEELELKAAENEKLAEELELKAAENEKLAEELELKAAENEKLAEELELKAAENEKLAEELELKAAENEKLAEELELKAAENEKLAEELELKAAENEKLAEELELKVAENEKLAEELELKVAENEKLAEELELKVAENKRLAEEVTQRLSEKELLAEDTSARLLEADSANSALQCKVKHLEEKLTLLSSEKETALATLEAEIVDLLTQLKGLNGTNSALESLCASKEKELVFLREHCELWTDPTTKKEKVITRHVKVFDGNEWMKLITDRPEALMSAFVIDAGNACHVPGDQIHEVSFLNNKEKH</sequence>
<evidence type="ECO:0000250" key="1">
    <source>
        <dbReference type="UniProtKB" id="Q585H6"/>
    </source>
</evidence>
<evidence type="ECO:0000255" key="2"/>
<evidence type="ECO:0000312" key="3">
    <source>
        <dbReference type="EMBL" id="CBH10670.1"/>
    </source>
</evidence>
<organism>
    <name type="scientific">Trypanosoma brucei gambiense (strain MHOM/CI/86/DAL972)</name>
    <dbReference type="NCBI Taxonomy" id="679716"/>
    <lineage>
        <taxon>Eukaryota</taxon>
        <taxon>Discoba</taxon>
        <taxon>Euglenozoa</taxon>
        <taxon>Kinetoplastea</taxon>
        <taxon>Metakinetoplastina</taxon>
        <taxon>Trypanosomatida</taxon>
        <taxon>Trypanosomatidae</taxon>
        <taxon>Trypanosoma</taxon>
    </lineage>
</organism>
<accession>C9ZN16</accession>
<reference evidence="3" key="1">
    <citation type="journal article" date="2010" name="PLoS Negl. Trop. Dis.">
        <title>The genome sequence of Trypanosoma brucei gambiense, causative agent of chronic human african trypanosomiasis.</title>
        <authorList>
            <person name="Jackson A.P."/>
            <person name="Sanders M."/>
            <person name="Berry A."/>
            <person name="McQuillan J."/>
            <person name="Aslett M.A."/>
            <person name="Quail M.A."/>
            <person name="Chukualim B."/>
            <person name="Capewell P."/>
            <person name="MacLeod A."/>
            <person name="Melville S.E."/>
            <person name="Gibson W."/>
            <person name="Barry J.D."/>
            <person name="Berriman M."/>
            <person name="Hertz-Fowler C."/>
        </authorList>
    </citation>
    <scope>NUCLEOTIDE SEQUENCE [LARGE SCALE GENOMIC DNA]</scope>
    <source>
        <strain>MHOM/CI/86/DAL972</strain>
    </source>
</reference>
<feature type="chain" id="PRO_0000414607" description="Flagellar attachment zone protein 1">
    <location>
        <begin position="1"/>
        <end position="1748"/>
    </location>
</feature>
<feature type="repeat" description="1" evidence="2">
    <location>
        <begin position="1012"/>
        <end position="1025"/>
    </location>
</feature>
<feature type="repeat" description="2" evidence="2">
    <location>
        <begin position="1026"/>
        <end position="1039"/>
    </location>
</feature>
<feature type="repeat" description="3" evidence="2">
    <location>
        <begin position="1040"/>
        <end position="1053"/>
    </location>
</feature>
<feature type="repeat" description="4" evidence="2">
    <location>
        <begin position="1054"/>
        <end position="1067"/>
    </location>
</feature>
<feature type="repeat" description="5" evidence="2">
    <location>
        <begin position="1068"/>
        <end position="1081"/>
    </location>
</feature>
<feature type="repeat" description="6" evidence="2">
    <location>
        <begin position="1082"/>
        <end position="1095"/>
    </location>
</feature>
<feature type="repeat" description="7" evidence="2">
    <location>
        <begin position="1096"/>
        <end position="1109"/>
    </location>
</feature>
<feature type="repeat" description="8" evidence="2">
    <location>
        <begin position="1110"/>
        <end position="1123"/>
    </location>
</feature>
<feature type="repeat" description="9" evidence="2">
    <location>
        <begin position="1124"/>
        <end position="1137"/>
    </location>
</feature>
<feature type="repeat" description="10" evidence="2">
    <location>
        <begin position="1138"/>
        <end position="1151"/>
    </location>
</feature>
<feature type="repeat" description="11" evidence="2">
    <location>
        <begin position="1152"/>
        <end position="1165"/>
    </location>
</feature>
<feature type="repeat" description="12" evidence="2">
    <location>
        <begin position="1166"/>
        <end position="1179"/>
    </location>
</feature>
<feature type="repeat" description="13" evidence="2">
    <location>
        <begin position="1180"/>
        <end position="1193"/>
    </location>
</feature>
<feature type="repeat" description="14" evidence="2">
    <location>
        <begin position="1194"/>
        <end position="1207"/>
    </location>
</feature>
<feature type="repeat" description="15" evidence="2">
    <location>
        <begin position="1208"/>
        <end position="1221"/>
    </location>
</feature>
<feature type="repeat" description="16" evidence="2">
    <location>
        <begin position="1222"/>
        <end position="1235"/>
    </location>
</feature>
<feature type="repeat" description="17" evidence="2">
    <location>
        <begin position="1236"/>
        <end position="1249"/>
    </location>
</feature>
<feature type="repeat" description="18" evidence="2">
    <location>
        <begin position="1250"/>
        <end position="1263"/>
    </location>
</feature>
<feature type="repeat" description="19" evidence="2">
    <location>
        <begin position="1264"/>
        <end position="1277"/>
    </location>
</feature>
<feature type="repeat" description="20" evidence="2">
    <location>
        <begin position="1278"/>
        <end position="1291"/>
    </location>
</feature>
<feature type="repeat" description="21" evidence="2">
    <location>
        <begin position="1292"/>
        <end position="1305"/>
    </location>
</feature>
<feature type="repeat" description="22" evidence="2">
    <location>
        <begin position="1306"/>
        <end position="1319"/>
    </location>
</feature>
<feature type="repeat" description="23" evidence="2">
    <location>
        <begin position="1320"/>
        <end position="1333"/>
    </location>
</feature>
<feature type="repeat" description="24" evidence="2">
    <location>
        <begin position="1334"/>
        <end position="1347"/>
    </location>
</feature>
<feature type="repeat" description="25" evidence="2">
    <location>
        <begin position="1348"/>
        <end position="1361"/>
    </location>
</feature>
<feature type="repeat" description="26" evidence="2">
    <location>
        <begin position="1362"/>
        <end position="1375"/>
    </location>
</feature>
<feature type="repeat" description="27" evidence="2">
    <location>
        <begin position="1376"/>
        <end position="1389"/>
    </location>
</feature>
<feature type="repeat" description="28" evidence="2">
    <location>
        <begin position="1390"/>
        <end position="1403"/>
    </location>
</feature>
<feature type="repeat" description="29" evidence="2">
    <location>
        <begin position="1404"/>
        <end position="1417"/>
    </location>
</feature>
<feature type="repeat" description="30" evidence="2">
    <location>
        <begin position="1418"/>
        <end position="1431"/>
    </location>
</feature>
<feature type="repeat" description="31" evidence="2">
    <location>
        <begin position="1432"/>
        <end position="1445"/>
    </location>
</feature>
<feature type="repeat" description="32" evidence="2">
    <location>
        <begin position="1446"/>
        <end position="1459"/>
    </location>
</feature>
<feature type="repeat" description="33" evidence="2">
    <location>
        <begin position="1460"/>
        <end position="1473"/>
    </location>
</feature>
<feature type="repeat" description="34" evidence="2">
    <location>
        <begin position="1474"/>
        <end position="1487"/>
    </location>
</feature>
<feature type="repeat" description="35" evidence="2">
    <location>
        <begin position="1488"/>
        <end position="1501"/>
    </location>
</feature>
<feature type="repeat" description="36" evidence="2">
    <location>
        <begin position="1502"/>
        <end position="1515"/>
    </location>
</feature>
<feature type="repeat" description="37" evidence="2">
    <location>
        <begin position="1516"/>
        <end position="1529"/>
    </location>
</feature>
<feature type="repeat" description="38" evidence="2">
    <location>
        <begin position="1530"/>
        <end position="1543"/>
    </location>
</feature>
<feature type="repeat" description="39" evidence="2">
    <location>
        <begin position="1544"/>
        <end position="1557"/>
    </location>
</feature>
<feature type="repeat" description="40" evidence="2">
    <location>
        <begin position="1558"/>
        <end position="1571"/>
    </location>
</feature>
<feature type="repeat" description="41" evidence="2">
    <location>
        <begin position="1572"/>
        <end position="1585"/>
    </location>
</feature>
<feature type="region of interest" description="41 X 14 AA tandem repeats of E-E-L-E-L-K-[VA]-A-E-N-E-K-L-A" evidence="2">
    <location>
        <begin position="1012"/>
        <end position="1529"/>
    </location>
</feature>
<feature type="coiled-coil region" evidence="2">
    <location>
        <begin position="613"/>
        <end position="657"/>
    </location>
</feature>
<feature type="coiled-coil region" evidence="2">
    <location>
        <begin position="684"/>
        <end position="864"/>
    </location>
</feature>
<feature type="coiled-coil region" evidence="2">
    <location>
        <begin position="903"/>
        <end position="1663"/>
    </location>
</feature>
<gene>
    <name type="ORF">TbgDal_IV3690</name>
</gene>
<comment type="function">
    <text evidence="1">A component of FAZ filament that is required for correct FAZ assembly and attachment. Not essential for new flagellum growth (By similarity).</text>
</comment>
<comment type="subcellular location">
    <subcellularLocation>
        <location evidence="1">Cell projection</location>
        <location evidence="1">Cilium</location>
        <location evidence="1">Flagellum</location>
    </subcellularLocation>
</comment>
<keyword id="KW-0966">Cell projection</keyword>
<keyword id="KW-0969">Cilium</keyword>
<keyword id="KW-0175">Coiled coil</keyword>
<keyword id="KW-0282">Flagellum</keyword>
<keyword id="KW-0677">Repeat</keyword>